<comment type="function">
    <text evidence="1">Catalyzes the reversible conversion of 2-phosphoglycerate (2-PG) into phosphoenolpyruvate (PEP). It is essential for the degradation of carbohydrates via glycolysis.</text>
</comment>
<comment type="catalytic activity">
    <reaction evidence="1">
        <text>(2R)-2-phosphoglycerate = phosphoenolpyruvate + H2O</text>
        <dbReference type="Rhea" id="RHEA:10164"/>
        <dbReference type="ChEBI" id="CHEBI:15377"/>
        <dbReference type="ChEBI" id="CHEBI:58289"/>
        <dbReference type="ChEBI" id="CHEBI:58702"/>
        <dbReference type="EC" id="4.2.1.11"/>
    </reaction>
</comment>
<comment type="cofactor">
    <cofactor evidence="1">
        <name>Mg(2+)</name>
        <dbReference type="ChEBI" id="CHEBI:18420"/>
    </cofactor>
    <text evidence="1">Binds a second Mg(2+) ion via substrate during catalysis.</text>
</comment>
<comment type="pathway">
    <text evidence="1">Carbohydrate degradation; glycolysis; pyruvate from D-glyceraldehyde 3-phosphate: step 4/5.</text>
</comment>
<comment type="subunit">
    <text evidence="1">Component of the RNA degradosome, a multiprotein complex involved in RNA processing and mRNA degradation.</text>
</comment>
<comment type="subcellular location">
    <subcellularLocation>
        <location evidence="1">Cytoplasm</location>
    </subcellularLocation>
    <subcellularLocation>
        <location evidence="1">Secreted</location>
    </subcellularLocation>
    <subcellularLocation>
        <location evidence="1">Cell surface</location>
    </subcellularLocation>
    <text evidence="1">Fractions of enolase are present in both the cytoplasm and on the cell surface.</text>
</comment>
<comment type="similarity">
    <text evidence="1">Belongs to the enolase family.</text>
</comment>
<accession>A6VR00</accession>
<gene>
    <name evidence="1" type="primary">eno</name>
    <name type="ordered locus">Asuc_2051</name>
</gene>
<dbReference type="EC" id="4.2.1.11" evidence="1"/>
<dbReference type="EMBL" id="CP000746">
    <property type="protein sequence ID" value="ABR75397.1"/>
    <property type="molecule type" value="Genomic_DNA"/>
</dbReference>
<dbReference type="RefSeq" id="WP_012073773.1">
    <property type="nucleotide sequence ID" value="NC_009655.1"/>
</dbReference>
<dbReference type="SMR" id="A6VR00"/>
<dbReference type="STRING" id="339671.Asuc_2051"/>
<dbReference type="KEGG" id="asu:Asuc_2051"/>
<dbReference type="eggNOG" id="COG0148">
    <property type="taxonomic scope" value="Bacteria"/>
</dbReference>
<dbReference type="HOGENOM" id="CLU_031223_2_1_6"/>
<dbReference type="OrthoDB" id="9804716at2"/>
<dbReference type="UniPathway" id="UPA00109">
    <property type="reaction ID" value="UER00187"/>
</dbReference>
<dbReference type="Proteomes" id="UP000001114">
    <property type="component" value="Chromosome"/>
</dbReference>
<dbReference type="GO" id="GO:0009986">
    <property type="term" value="C:cell surface"/>
    <property type="evidence" value="ECO:0007669"/>
    <property type="project" value="UniProtKB-SubCell"/>
</dbReference>
<dbReference type="GO" id="GO:0005576">
    <property type="term" value="C:extracellular region"/>
    <property type="evidence" value="ECO:0007669"/>
    <property type="project" value="UniProtKB-SubCell"/>
</dbReference>
<dbReference type="GO" id="GO:0000015">
    <property type="term" value="C:phosphopyruvate hydratase complex"/>
    <property type="evidence" value="ECO:0007669"/>
    <property type="project" value="InterPro"/>
</dbReference>
<dbReference type="GO" id="GO:0000287">
    <property type="term" value="F:magnesium ion binding"/>
    <property type="evidence" value="ECO:0007669"/>
    <property type="project" value="UniProtKB-UniRule"/>
</dbReference>
<dbReference type="GO" id="GO:0004634">
    <property type="term" value="F:phosphopyruvate hydratase activity"/>
    <property type="evidence" value="ECO:0007669"/>
    <property type="project" value="UniProtKB-UniRule"/>
</dbReference>
<dbReference type="GO" id="GO:0006096">
    <property type="term" value="P:glycolytic process"/>
    <property type="evidence" value="ECO:0007669"/>
    <property type="project" value="UniProtKB-UniRule"/>
</dbReference>
<dbReference type="CDD" id="cd03313">
    <property type="entry name" value="enolase"/>
    <property type="match status" value="1"/>
</dbReference>
<dbReference type="FunFam" id="3.20.20.120:FF:000001">
    <property type="entry name" value="Enolase"/>
    <property type="match status" value="1"/>
</dbReference>
<dbReference type="FunFam" id="3.30.390.10:FF:000001">
    <property type="entry name" value="Enolase"/>
    <property type="match status" value="1"/>
</dbReference>
<dbReference type="Gene3D" id="3.20.20.120">
    <property type="entry name" value="Enolase-like C-terminal domain"/>
    <property type="match status" value="1"/>
</dbReference>
<dbReference type="Gene3D" id="3.30.390.10">
    <property type="entry name" value="Enolase-like, N-terminal domain"/>
    <property type="match status" value="1"/>
</dbReference>
<dbReference type="HAMAP" id="MF_00318">
    <property type="entry name" value="Enolase"/>
    <property type="match status" value="1"/>
</dbReference>
<dbReference type="InterPro" id="IPR000941">
    <property type="entry name" value="Enolase"/>
</dbReference>
<dbReference type="InterPro" id="IPR036849">
    <property type="entry name" value="Enolase-like_C_sf"/>
</dbReference>
<dbReference type="InterPro" id="IPR029017">
    <property type="entry name" value="Enolase-like_N"/>
</dbReference>
<dbReference type="InterPro" id="IPR020810">
    <property type="entry name" value="Enolase_C"/>
</dbReference>
<dbReference type="InterPro" id="IPR020809">
    <property type="entry name" value="Enolase_CS"/>
</dbReference>
<dbReference type="InterPro" id="IPR020811">
    <property type="entry name" value="Enolase_N"/>
</dbReference>
<dbReference type="NCBIfam" id="TIGR01060">
    <property type="entry name" value="eno"/>
    <property type="match status" value="1"/>
</dbReference>
<dbReference type="PANTHER" id="PTHR11902">
    <property type="entry name" value="ENOLASE"/>
    <property type="match status" value="1"/>
</dbReference>
<dbReference type="PANTHER" id="PTHR11902:SF1">
    <property type="entry name" value="ENOLASE"/>
    <property type="match status" value="1"/>
</dbReference>
<dbReference type="Pfam" id="PF00113">
    <property type="entry name" value="Enolase_C"/>
    <property type="match status" value="1"/>
</dbReference>
<dbReference type="Pfam" id="PF03952">
    <property type="entry name" value="Enolase_N"/>
    <property type="match status" value="1"/>
</dbReference>
<dbReference type="PIRSF" id="PIRSF001400">
    <property type="entry name" value="Enolase"/>
    <property type="match status" value="1"/>
</dbReference>
<dbReference type="PRINTS" id="PR00148">
    <property type="entry name" value="ENOLASE"/>
</dbReference>
<dbReference type="SFLD" id="SFLDS00001">
    <property type="entry name" value="Enolase"/>
    <property type="match status" value="1"/>
</dbReference>
<dbReference type="SFLD" id="SFLDF00002">
    <property type="entry name" value="enolase"/>
    <property type="match status" value="1"/>
</dbReference>
<dbReference type="SMART" id="SM01192">
    <property type="entry name" value="Enolase_C"/>
    <property type="match status" value="1"/>
</dbReference>
<dbReference type="SMART" id="SM01193">
    <property type="entry name" value="Enolase_N"/>
    <property type="match status" value="1"/>
</dbReference>
<dbReference type="SUPFAM" id="SSF51604">
    <property type="entry name" value="Enolase C-terminal domain-like"/>
    <property type="match status" value="1"/>
</dbReference>
<dbReference type="SUPFAM" id="SSF54826">
    <property type="entry name" value="Enolase N-terminal domain-like"/>
    <property type="match status" value="1"/>
</dbReference>
<dbReference type="PROSITE" id="PS00164">
    <property type="entry name" value="ENOLASE"/>
    <property type="match status" value="1"/>
</dbReference>
<feature type="chain" id="PRO_1000072004" description="Enolase">
    <location>
        <begin position="1"/>
        <end position="433"/>
    </location>
</feature>
<feature type="active site" description="Proton donor" evidence="1">
    <location>
        <position position="209"/>
    </location>
</feature>
<feature type="active site" description="Proton acceptor" evidence="1">
    <location>
        <position position="343"/>
    </location>
</feature>
<feature type="binding site" evidence="1">
    <location>
        <position position="167"/>
    </location>
    <ligand>
        <name>(2R)-2-phosphoglycerate</name>
        <dbReference type="ChEBI" id="CHEBI:58289"/>
    </ligand>
</feature>
<feature type="binding site" evidence="1">
    <location>
        <position position="246"/>
    </location>
    <ligand>
        <name>Mg(2+)</name>
        <dbReference type="ChEBI" id="CHEBI:18420"/>
    </ligand>
</feature>
<feature type="binding site" evidence="1">
    <location>
        <position position="291"/>
    </location>
    <ligand>
        <name>Mg(2+)</name>
        <dbReference type="ChEBI" id="CHEBI:18420"/>
    </ligand>
</feature>
<feature type="binding site" evidence="1">
    <location>
        <position position="318"/>
    </location>
    <ligand>
        <name>Mg(2+)</name>
        <dbReference type="ChEBI" id="CHEBI:18420"/>
    </ligand>
</feature>
<feature type="binding site" evidence="1">
    <location>
        <position position="343"/>
    </location>
    <ligand>
        <name>(2R)-2-phosphoglycerate</name>
        <dbReference type="ChEBI" id="CHEBI:58289"/>
    </ligand>
</feature>
<feature type="binding site" evidence="1">
    <location>
        <position position="372"/>
    </location>
    <ligand>
        <name>(2R)-2-phosphoglycerate</name>
        <dbReference type="ChEBI" id="CHEBI:58289"/>
    </ligand>
</feature>
<feature type="binding site" evidence="1">
    <location>
        <position position="373"/>
    </location>
    <ligand>
        <name>(2R)-2-phosphoglycerate</name>
        <dbReference type="ChEBI" id="CHEBI:58289"/>
    </ligand>
</feature>
<feature type="binding site" evidence="1">
    <location>
        <position position="394"/>
    </location>
    <ligand>
        <name>(2R)-2-phosphoglycerate</name>
        <dbReference type="ChEBI" id="CHEBI:58289"/>
    </ligand>
</feature>
<proteinExistence type="inferred from homology"/>
<protein>
    <recommendedName>
        <fullName evidence="1">Enolase</fullName>
        <ecNumber evidence="1">4.2.1.11</ecNumber>
    </recommendedName>
    <alternativeName>
        <fullName evidence="1">2-phospho-D-glycerate hydro-lyase</fullName>
    </alternativeName>
    <alternativeName>
        <fullName evidence="1">2-phosphoglycerate dehydratase</fullName>
    </alternativeName>
</protein>
<name>ENO_ACTSZ</name>
<sequence>MAKIVKVIGREIIDSRGNPTVEAEVHLEGGFVGLAAAPSGASTGSREALELRDGDKSRFLGKGVLKAVSAVNNEIAQAVVGKDASNQAEIDQIMIDLDGTDNKSKFGANAILAVSLANAKAAAASKGLPLYAYIAELNGTPGQYSMPLPMMNIINGGEHADNNVDIQEFMIQPVGAKTLREAVRIGSEVFHNLAKVLKAKGYNTAVGDEGGFAPNLGSNAEALACIKEAVEKAGYTLGKDVTLAMDCASSEFYNKETGKYEMKGEGRSFTSQEFTHYLEELCKQYPIVSIEDGQDESDWDGFAYQTKVLGDNVQLVGDDLFVTNTKILKEGIEKGIANSILIKFNQIGSLTETLAAIKMAKDAGYTAVISHRSGETEDATIADLAVGTAAGQIKTGSMSRSDRVAKYNQLIRIEEALGDKAPFLGLKAVKGQA</sequence>
<organism>
    <name type="scientific">Actinobacillus succinogenes (strain ATCC 55618 / DSM 22257 / CCUG 43843 / 130Z)</name>
    <dbReference type="NCBI Taxonomy" id="339671"/>
    <lineage>
        <taxon>Bacteria</taxon>
        <taxon>Pseudomonadati</taxon>
        <taxon>Pseudomonadota</taxon>
        <taxon>Gammaproteobacteria</taxon>
        <taxon>Pasteurellales</taxon>
        <taxon>Pasteurellaceae</taxon>
        <taxon>Actinobacillus</taxon>
    </lineage>
</organism>
<evidence type="ECO:0000255" key="1">
    <source>
        <dbReference type="HAMAP-Rule" id="MF_00318"/>
    </source>
</evidence>
<reference key="1">
    <citation type="journal article" date="2010" name="BMC Genomics">
        <title>A genomic perspective on the potential of Actinobacillus succinogenes for industrial succinate production.</title>
        <authorList>
            <person name="McKinlay J.B."/>
            <person name="Laivenieks M."/>
            <person name="Schindler B.D."/>
            <person name="McKinlay A.A."/>
            <person name="Siddaramappa S."/>
            <person name="Challacombe J.F."/>
            <person name="Lowry S.R."/>
            <person name="Clum A."/>
            <person name="Lapidus A.L."/>
            <person name="Burkhart K.B."/>
            <person name="Harkins V."/>
            <person name="Vieille C."/>
        </authorList>
    </citation>
    <scope>NUCLEOTIDE SEQUENCE [LARGE SCALE GENOMIC DNA]</scope>
    <source>
        <strain>ATCC 55618 / DSM 22257 / CCUG 43843 / 130Z</strain>
    </source>
</reference>
<keyword id="KW-0963">Cytoplasm</keyword>
<keyword id="KW-0324">Glycolysis</keyword>
<keyword id="KW-0456">Lyase</keyword>
<keyword id="KW-0460">Magnesium</keyword>
<keyword id="KW-0479">Metal-binding</keyword>
<keyword id="KW-1185">Reference proteome</keyword>
<keyword id="KW-0964">Secreted</keyword>